<comment type="function">
    <text evidence="1">Single strand-specific metallo-endoribonuclease involved in late-stage 70S ribosome quality control and in maturation of the 3' terminus of the 16S rRNA.</text>
</comment>
<comment type="cofactor">
    <cofactor evidence="1">
        <name>Zn(2+)</name>
        <dbReference type="ChEBI" id="CHEBI:29105"/>
    </cofactor>
    <text evidence="1">Binds 1 zinc ion.</text>
</comment>
<comment type="subcellular location">
    <subcellularLocation>
        <location evidence="1">Cytoplasm</location>
    </subcellularLocation>
</comment>
<comment type="similarity">
    <text evidence="1">Belongs to the endoribonuclease YbeY family.</text>
</comment>
<dbReference type="EC" id="3.1.-.-" evidence="1"/>
<dbReference type="EMBL" id="CP000462">
    <property type="protein sequence ID" value="ABK35803.1"/>
    <property type="molecule type" value="Genomic_DNA"/>
</dbReference>
<dbReference type="RefSeq" id="WP_011707018.1">
    <property type="nucleotide sequence ID" value="NC_008570.1"/>
</dbReference>
<dbReference type="RefSeq" id="YP_857734.1">
    <property type="nucleotide sequence ID" value="NC_008570.1"/>
</dbReference>
<dbReference type="SMR" id="A0KN83"/>
<dbReference type="STRING" id="380703.AHA_3243"/>
<dbReference type="EnsemblBacteria" id="ABK35803">
    <property type="protein sequence ID" value="ABK35803"/>
    <property type="gene ID" value="AHA_3243"/>
</dbReference>
<dbReference type="GeneID" id="4490697"/>
<dbReference type="KEGG" id="aha:AHA_3243"/>
<dbReference type="PATRIC" id="fig|380703.7.peg.3238"/>
<dbReference type="eggNOG" id="COG0319">
    <property type="taxonomic scope" value="Bacteria"/>
</dbReference>
<dbReference type="HOGENOM" id="CLU_106710_0_1_6"/>
<dbReference type="OrthoDB" id="9807740at2"/>
<dbReference type="Proteomes" id="UP000000756">
    <property type="component" value="Chromosome"/>
</dbReference>
<dbReference type="GO" id="GO:0005737">
    <property type="term" value="C:cytoplasm"/>
    <property type="evidence" value="ECO:0007669"/>
    <property type="project" value="UniProtKB-SubCell"/>
</dbReference>
<dbReference type="GO" id="GO:0004222">
    <property type="term" value="F:metalloendopeptidase activity"/>
    <property type="evidence" value="ECO:0007669"/>
    <property type="project" value="InterPro"/>
</dbReference>
<dbReference type="GO" id="GO:0004521">
    <property type="term" value="F:RNA endonuclease activity"/>
    <property type="evidence" value="ECO:0007669"/>
    <property type="project" value="UniProtKB-UniRule"/>
</dbReference>
<dbReference type="GO" id="GO:0008270">
    <property type="term" value="F:zinc ion binding"/>
    <property type="evidence" value="ECO:0007669"/>
    <property type="project" value="UniProtKB-UniRule"/>
</dbReference>
<dbReference type="GO" id="GO:0006364">
    <property type="term" value="P:rRNA processing"/>
    <property type="evidence" value="ECO:0007669"/>
    <property type="project" value="UniProtKB-UniRule"/>
</dbReference>
<dbReference type="Gene3D" id="3.40.390.30">
    <property type="entry name" value="Metalloproteases ('zincins'), catalytic domain"/>
    <property type="match status" value="1"/>
</dbReference>
<dbReference type="HAMAP" id="MF_00009">
    <property type="entry name" value="Endoribonucl_YbeY"/>
    <property type="match status" value="1"/>
</dbReference>
<dbReference type="InterPro" id="IPR023091">
    <property type="entry name" value="MetalPrtase_cat_dom_sf_prd"/>
</dbReference>
<dbReference type="InterPro" id="IPR002036">
    <property type="entry name" value="YbeY"/>
</dbReference>
<dbReference type="InterPro" id="IPR020549">
    <property type="entry name" value="YbeY_CS"/>
</dbReference>
<dbReference type="NCBIfam" id="TIGR00043">
    <property type="entry name" value="rRNA maturation RNase YbeY"/>
    <property type="match status" value="1"/>
</dbReference>
<dbReference type="PANTHER" id="PTHR46986">
    <property type="entry name" value="ENDORIBONUCLEASE YBEY, CHLOROPLASTIC"/>
    <property type="match status" value="1"/>
</dbReference>
<dbReference type="PANTHER" id="PTHR46986:SF1">
    <property type="entry name" value="ENDORIBONUCLEASE YBEY, CHLOROPLASTIC"/>
    <property type="match status" value="1"/>
</dbReference>
<dbReference type="Pfam" id="PF02130">
    <property type="entry name" value="YbeY"/>
    <property type="match status" value="1"/>
</dbReference>
<dbReference type="SUPFAM" id="SSF55486">
    <property type="entry name" value="Metalloproteases ('zincins'), catalytic domain"/>
    <property type="match status" value="1"/>
</dbReference>
<dbReference type="PROSITE" id="PS01306">
    <property type="entry name" value="UPF0054"/>
    <property type="match status" value="1"/>
</dbReference>
<feature type="chain" id="PRO_0000284152" description="Endoribonuclease YbeY">
    <location>
        <begin position="1"/>
        <end position="154"/>
    </location>
</feature>
<feature type="binding site" evidence="1">
    <location>
        <position position="113"/>
    </location>
    <ligand>
        <name>Zn(2+)</name>
        <dbReference type="ChEBI" id="CHEBI:29105"/>
        <note>catalytic</note>
    </ligand>
</feature>
<feature type="binding site" evidence="1">
    <location>
        <position position="117"/>
    </location>
    <ligand>
        <name>Zn(2+)</name>
        <dbReference type="ChEBI" id="CHEBI:29105"/>
        <note>catalytic</note>
    </ligand>
</feature>
<feature type="binding site" evidence="1">
    <location>
        <position position="123"/>
    </location>
    <ligand>
        <name>Zn(2+)</name>
        <dbReference type="ChEBI" id="CHEBI:29105"/>
        <note>catalytic</note>
    </ligand>
</feature>
<protein>
    <recommendedName>
        <fullName evidence="1">Endoribonuclease YbeY</fullName>
        <ecNumber evidence="1">3.1.-.-</ecNumber>
    </recommendedName>
</protein>
<accession>A0KN83</accession>
<organism>
    <name type="scientific">Aeromonas hydrophila subsp. hydrophila (strain ATCC 7966 / DSM 30187 / BCRC 13018 / CCUG 14551 / JCM 1027 / KCTC 2358 / NCIMB 9240 / NCTC 8049)</name>
    <dbReference type="NCBI Taxonomy" id="380703"/>
    <lineage>
        <taxon>Bacteria</taxon>
        <taxon>Pseudomonadati</taxon>
        <taxon>Pseudomonadota</taxon>
        <taxon>Gammaproteobacteria</taxon>
        <taxon>Aeromonadales</taxon>
        <taxon>Aeromonadaceae</taxon>
        <taxon>Aeromonas</taxon>
    </lineage>
</organism>
<proteinExistence type="inferred from homology"/>
<keyword id="KW-0963">Cytoplasm</keyword>
<keyword id="KW-0255">Endonuclease</keyword>
<keyword id="KW-0378">Hydrolase</keyword>
<keyword id="KW-0479">Metal-binding</keyword>
<keyword id="KW-0540">Nuclease</keyword>
<keyword id="KW-1185">Reference proteome</keyword>
<keyword id="KW-0690">Ribosome biogenesis</keyword>
<keyword id="KW-0698">rRNA processing</keyword>
<keyword id="KW-0862">Zinc</keyword>
<gene>
    <name evidence="1" type="primary">ybeY</name>
    <name type="ordered locus">AHA_3243</name>
</gene>
<sequence length="154" mass="17145">MSVTLDLQLASASTDGLPSEAQLQGWLDGTILGFQQEAEVTVRIVDEAESNELNLTYRGKDKPTNVLSFPFEAPPGLELPLLGDLVICRQVVEREAAEQGKPLMAHWAHMVVHGSLHLLGYDHIEDDEAEEMETLERDIMQELGFADPYLNDEE</sequence>
<name>YBEY_AERHH</name>
<reference key="1">
    <citation type="journal article" date="2006" name="J. Bacteriol.">
        <title>Genome sequence of Aeromonas hydrophila ATCC 7966T: jack of all trades.</title>
        <authorList>
            <person name="Seshadri R."/>
            <person name="Joseph S.W."/>
            <person name="Chopra A.K."/>
            <person name="Sha J."/>
            <person name="Shaw J."/>
            <person name="Graf J."/>
            <person name="Haft D.H."/>
            <person name="Wu M."/>
            <person name="Ren Q."/>
            <person name="Rosovitz M.J."/>
            <person name="Madupu R."/>
            <person name="Tallon L."/>
            <person name="Kim M."/>
            <person name="Jin S."/>
            <person name="Vuong H."/>
            <person name="Stine O.C."/>
            <person name="Ali A."/>
            <person name="Horneman A.J."/>
            <person name="Heidelberg J.F."/>
        </authorList>
    </citation>
    <scope>NUCLEOTIDE SEQUENCE [LARGE SCALE GENOMIC DNA]</scope>
    <source>
        <strain>ATCC 7966 / DSM 30187 / BCRC 13018 / CCUG 14551 / JCM 1027 / KCTC 2358 / NCIMB 9240 / NCTC 8049</strain>
    </source>
</reference>
<evidence type="ECO:0000255" key="1">
    <source>
        <dbReference type="HAMAP-Rule" id="MF_00009"/>
    </source>
</evidence>